<comment type="function">
    <text evidence="1">Plays an essential role in the initiation and regulation of chromosomal replication. ATP-DnaA binds to the origin of replication (oriC) to initiate formation of the DNA replication initiation complex once per cell cycle. Binds the DnaA box (a 9 base pair repeat at the origin) and separates the double-stranded (ds)DNA. Forms a right-handed helical filament on oriC DNA; dsDNA binds to the exterior of the filament while single-stranded (ss)DNA is stabiized in the filament's interior. The ATP-DnaA-oriC complex binds and stabilizes one strand of the AT-rich DNA unwinding element (DUE), permitting loading of DNA polymerase. After initiation quickly degrades to an ADP-DnaA complex that is not apt for DNA replication. Binds acidic phospholipids.</text>
</comment>
<comment type="subunit">
    <text evidence="1">Oligomerizes as a right-handed, spiral filament on DNA at oriC.</text>
</comment>
<comment type="subcellular location">
    <subcellularLocation>
        <location evidence="1">Cytoplasm</location>
    </subcellularLocation>
</comment>
<comment type="domain">
    <text evidence="1">Domain I is involved in oligomerization and binding regulators, domain II is flexibile and of varying length in different bacteria, domain III forms the AAA+ region, while domain IV binds dsDNA.</text>
</comment>
<comment type="similarity">
    <text evidence="1">Belongs to the DnaA family.</text>
</comment>
<accession>B7JJB7</accession>
<dbReference type="EMBL" id="CP001283">
    <property type="protein sequence ID" value="ACK91525.1"/>
    <property type="molecule type" value="Genomic_DNA"/>
</dbReference>
<dbReference type="RefSeq" id="WP_000428021.1">
    <property type="nucleotide sequence ID" value="NC_011773.1"/>
</dbReference>
<dbReference type="SMR" id="B7JJB7"/>
<dbReference type="GeneID" id="45020035"/>
<dbReference type="KEGG" id="bcu:BCAH820_0001"/>
<dbReference type="HOGENOM" id="CLU_026910_3_1_9"/>
<dbReference type="Proteomes" id="UP000001363">
    <property type="component" value="Chromosome"/>
</dbReference>
<dbReference type="GO" id="GO:0005737">
    <property type="term" value="C:cytoplasm"/>
    <property type="evidence" value="ECO:0007669"/>
    <property type="project" value="UniProtKB-SubCell"/>
</dbReference>
<dbReference type="GO" id="GO:0005886">
    <property type="term" value="C:plasma membrane"/>
    <property type="evidence" value="ECO:0007669"/>
    <property type="project" value="TreeGrafter"/>
</dbReference>
<dbReference type="GO" id="GO:0005524">
    <property type="term" value="F:ATP binding"/>
    <property type="evidence" value="ECO:0007669"/>
    <property type="project" value="UniProtKB-UniRule"/>
</dbReference>
<dbReference type="GO" id="GO:0016887">
    <property type="term" value="F:ATP hydrolysis activity"/>
    <property type="evidence" value="ECO:0007669"/>
    <property type="project" value="InterPro"/>
</dbReference>
<dbReference type="GO" id="GO:0003688">
    <property type="term" value="F:DNA replication origin binding"/>
    <property type="evidence" value="ECO:0007669"/>
    <property type="project" value="UniProtKB-UniRule"/>
</dbReference>
<dbReference type="GO" id="GO:0008289">
    <property type="term" value="F:lipid binding"/>
    <property type="evidence" value="ECO:0007669"/>
    <property type="project" value="UniProtKB-KW"/>
</dbReference>
<dbReference type="GO" id="GO:0006270">
    <property type="term" value="P:DNA replication initiation"/>
    <property type="evidence" value="ECO:0007669"/>
    <property type="project" value="UniProtKB-UniRule"/>
</dbReference>
<dbReference type="GO" id="GO:0006275">
    <property type="term" value="P:regulation of DNA replication"/>
    <property type="evidence" value="ECO:0007669"/>
    <property type="project" value="UniProtKB-UniRule"/>
</dbReference>
<dbReference type="CDD" id="cd00009">
    <property type="entry name" value="AAA"/>
    <property type="match status" value="1"/>
</dbReference>
<dbReference type="CDD" id="cd06571">
    <property type="entry name" value="Bac_DnaA_C"/>
    <property type="match status" value="1"/>
</dbReference>
<dbReference type="FunFam" id="1.10.1750.10:FF:000003">
    <property type="entry name" value="Chromosomal replication initiator protein DnaA"/>
    <property type="match status" value="1"/>
</dbReference>
<dbReference type="FunFam" id="1.10.8.60:FF:000003">
    <property type="entry name" value="Chromosomal replication initiator protein DnaA"/>
    <property type="match status" value="1"/>
</dbReference>
<dbReference type="FunFam" id="3.30.300.180:FF:000002">
    <property type="entry name" value="Chromosomal replication initiator protein DnaA"/>
    <property type="match status" value="1"/>
</dbReference>
<dbReference type="FunFam" id="3.40.50.300:FF:000150">
    <property type="entry name" value="Chromosomal replication initiator protein DnaA"/>
    <property type="match status" value="1"/>
</dbReference>
<dbReference type="Gene3D" id="1.10.1750.10">
    <property type="match status" value="1"/>
</dbReference>
<dbReference type="Gene3D" id="1.10.8.60">
    <property type="match status" value="1"/>
</dbReference>
<dbReference type="Gene3D" id="3.30.300.180">
    <property type="match status" value="1"/>
</dbReference>
<dbReference type="Gene3D" id="3.40.50.300">
    <property type="entry name" value="P-loop containing nucleotide triphosphate hydrolases"/>
    <property type="match status" value="1"/>
</dbReference>
<dbReference type="HAMAP" id="MF_00377">
    <property type="entry name" value="DnaA_bact"/>
    <property type="match status" value="1"/>
</dbReference>
<dbReference type="InterPro" id="IPR003593">
    <property type="entry name" value="AAA+_ATPase"/>
</dbReference>
<dbReference type="InterPro" id="IPR001957">
    <property type="entry name" value="Chromosome_initiator_DnaA"/>
</dbReference>
<dbReference type="InterPro" id="IPR020591">
    <property type="entry name" value="Chromosome_initiator_DnaA-like"/>
</dbReference>
<dbReference type="InterPro" id="IPR018312">
    <property type="entry name" value="Chromosome_initiator_DnaA_CS"/>
</dbReference>
<dbReference type="InterPro" id="IPR013159">
    <property type="entry name" value="DnaA_C"/>
</dbReference>
<dbReference type="InterPro" id="IPR013317">
    <property type="entry name" value="DnaA_dom"/>
</dbReference>
<dbReference type="InterPro" id="IPR024633">
    <property type="entry name" value="DnaA_N_dom"/>
</dbReference>
<dbReference type="InterPro" id="IPR038454">
    <property type="entry name" value="DnaA_N_sf"/>
</dbReference>
<dbReference type="InterPro" id="IPR027417">
    <property type="entry name" value="P-loop_NTPase"/>
</dbReference>
<dbReference type="InterPro" id="IPR010921">
    <property type="entry name" value="Trp_repressor/repl_initiator"/>
</dbReference>
<dbReference type="NCBIfam" id="TIGR00362">
    <property type="entry name" value="DnaA"/>
    <property type="match status" value="1"/>
</dbReference>
<dbReference type="NCBIfam" id="NF010686">
    <property type="entry name" value="PRK14086.1"/>
    <property type="match status" value="1"/>
</dbReference>
<dbReference type="PANTHER" id="PTHR30050">
    <property type="entry name" value="CHROMOSOMAL REPLICATION INITIATOR PROTEIN DNAA"/>
    <property type="match status" value="1"/>
</dbReference>
<dbReference type="PANTHER" id="PTHR30050:SF2">
    <property type="entry name" value="CHROMOSOMAL REPLICATION INITIATOR PROTEIN DNAA"/>
    <property type="match status" value="1"/>
</dbReference>
<dbReference type="Pfam" id="PF00308">
    <property type="entry name" value="Bac_DnaA"/>
    <property type="match status" value="1"/>
</dbReference>
<dbReference type="Pfam" id="PF08299">
    <property type="entry name" value="Bac_DnaA_C"/>
    <property type="match status" value="1"/>
</dbReference>
<dbReference type="Pfam" id="PF11638">
    <property type="entry name" value="DnaA_N"/>
    <property type="match status" value="1"/>
</dbReference>
<dbReference type="PRINTS" id="PR00051">
    <property type="entry name" value="DNAA"/>
</dbReference>
<dbReference type="SMART" id="SM00382">
    <property type="entry name" value="AAA"/>
    <property type="match status" value="1"/>
</dbReference>
<dbReference type="SMART" id="SM00760">
    <property type="entry name" value="Bac_DnaA_C"/>
    <property type="match status" value="1"/>
</dbReference>
<dbReference type="SUPFAM" id="SSF52540">
    <property type="entry name" value="P-loop containing nucleoside triphosphate hydrolases"/>
    <property type="match status" value="1"/>
</dbReference>
<dbReference type="SUPFAM" id="SSF48295">
    <property type="entry name" value="TrpR-like"/>
    <property type="match status" value="1"/>
</dbReference>
<dbReference type="PROSITE" id="PS01008">
    <property type="entry name" value="DNAA"/>
    <property type="match status" value="1"/>
</dbReference>
<protein>
    <recommendedName>
        <fullName evidence="1">Chromosomal replication initiator protein DnaA</fullName>
    </recommendedName>
</protein>
<evidence type="ECO:0000255" key="1">
    <source>
        <dbReference type="HAMAP-Rule" id="MF_00377"/>
    </source>
</evidence>
<gene>
    <name evidence="1" type="primary">dnaA</name>
    <name type="ordered locus">BCAH820_0001</name>
</gene>
<feature type="chain" id="PRO_1000121944" description="Chromosomal replication initiator protein DnaA">
    <location>
        <begin position="1"/>
        <end position="446"/>
    </location>
</feature>
<feature type="region of interest" description="Domain I, interacts with DnaA modulators" evidence="1">
    <location>
        <begin position="1"/>
        <end position="92"/>
    </location>
</feature>
<feature type="region of interest" description="Domain II" evidence="1">
    <location>
        <begin position="93"/>
        <end position="109"/>
    </location>
</feature>
<feature type="region of interest" description="Domain III, AAA+ region" evidence="1">
    <location>
        <begin position="110"/>
        <end position="326"/>
    </location>
</feature>
<feature type="region of interest" description="Domain IV, binds dsDNA" evidence="1">
    <location>
        <begin position="327"/>
        <end position="446"/>
    </location>
</feature>
<feature type="binding site" evidence="1">
    <location>
        <position position="154"/>
    </location>
    <ligand>
        <name>ATP</name>
        <dbReference type="ChEBI" id="CHEBI:30616"/>
    </ligand>
</feature>
<feature type="binding site" evidence="1">
    <location>
        <position position="156"/>
    </location>
    <ligand>
        <name>ATP</name>
        <dbReference type="ChEBI" id="CHEBI:30616"/>
    </ligand>
</feature>
<feature type="binding site" evidence="1">
    <location>
        <position position="157"/>
    </location>
    <ligand>
        <name>ATP</name>
        <dbReference type="ChEBI" id="CHEBI:30616"/>
    </ligand>
</feature>
<feature type="binding site" evidence="1">
    <location>
        <position position="158"/>
    </location>
    <ligand>
        <name>ATP</name>
        <dbReference type="ChEBI" id="CHEBI:30616"/>
    </ligand>
</feature>
<reference key="1">
    <citation type="submission" date="2008-10" db="EMBL/GenBank/DDBJ databases">
        <title>Genome sequence of Bacillus cereus AH820.</title>
        <authorList>
            <person name="Dodson R.J."/>
            <person name="Durkin A.S."/>
            <person name="Rosovitz M.J."/>
            <person name="Rasko D.A."/>
            <person name="Hoffmaster A."/>
            <person name="Ravel J."/>
            <person name="Sutton G."/>
        </authorList>
    </citation>
    <scope>NUCLEOTIDE SEQUENCE [LARGE SCALE GENOMIC DNA]</scope>
    <source>
        <strain>AH820</strain>
    </source>
</reference>
<keyword id="KW-0067">ATP-binding</keyword>
<keyword id="KW-0963">Cytoplasm</keyword>
<keyword id="KW-0235">DNA replication</keyword>
<keyword id="KW-0238">DNA-binding</keyword>
<keyword id="KW-0446">Lipid-binding</keyword>
<keyword id="KW-0547">Nucleotide-binding</keyword>
<name>DNAA_BACC0</name>
<proteinExistence type="inferred from homology"/>
<sequence>MENISDLWNSALKELEKKVSKPSYETWLKSTTAHNLKKDVLTITAPNEFARDWLESHYSELISETLYDLTGAKLAIRFIIPQSQAEEEIDLPPAKPNAAQDDSNHLPQSMLNPKYTFDTFVIGSGNRFAHAASLAVAEAPAKAYNPLFIYGGVGLGKTHLMHAIGHYVIEHNPNAKVVYLSSEKFTNEFINSIRDNKAVDFRNKYRNVDVLLIDDIQFLAGKEQTQEEFFHTFNALHEESKQIVISSDRPPKEIPTLEDRLRSRFEWGLITDITPPDLETRIAILRKKAKAEGLDIPNEVMLYIANQIDSNIRELEGALIRVVAYSSLINKDINADLAAEALKDIIPNSKPKIISIYDIQKAVGDVYQVKLEDFKAKKRTKSVAFPRQIAMYLSRELTDSSLPKIGEEFGGRDHTTVIHAHEKISKLLKTDTQLQKQVEEINDILK</sequence>
<organism>
    <name type="scientific">Bacillus cereus (strain AH820)</name>
    <dbReference type="NCBI Taxonomy" id="405535"/>
    <lineage>
        <taxon>Bacteria</taxon>
        <taxon>Bacillati</taxon>
        <taxon>Bacillota</taxon>
        <taxon>Bacilli</taxon>
        <taxon>Bacillales</taxon>
        <taxon>Bacillaceae</taxon>
        <taxon>Bacillus</taxon>
        <taxon>Bacillus cereus group</taxon>
    </lineage>
</organism>